<comment type="function">
    <text evidence="1">Catalyzes the stereoinversion of LL-2,6-diaminopimelate (L,L-DAP) to meso-diaminopimelate (meso-DAP), a precursor of L-lysine and an essential component of the bacterial peptidoglycan.</text>
</comment>
<comment type="catalytic activity">
    <reaction evidence="1">
        <text>(2S,6S)-2,6-diaminopimelate = meso-2,6-diaminopimelate</text>
        <dbReference type="Rhea" id="RHEA:15393"/>
        <dbReference type="ChEBI" id="CHEBI:57609"/>
        <dbReference type="ChEBI" id="CHEBI:57791"/>
        <dbReference type="EC" id="5.1.1.7"/>
    </reaction>
</comment>
<comment type="pathway">
    <text evidence="1">Amino-acid biosynthesis; L-lysine biosynthesis via DAP pathway; DL-2,6-diaminopimelate from LL-2,6-diaminopimelate: step 1/1.</text>
</comment>
<comment type="subunit">
    <text evidence="1">Homodimer.</text>
</comment>
<comment type="subcellular location">
    <subcellularLocation>
        <location evidence="1">Cytoplasm</location>
    </subcellularLocation>
</comment>
<comment type="similarity">
    <text evidence="1">Belongs to the diaminopimelate epimerase family.</text>
</comment>
<accession>A3Q9P7</accession>
<organism>
    <name type="scientific">Shewanella loihica (strain ATCC BAA-1088 / PV-4)</name>
    <dbReference type="NCBI Taxonomy" id="323850"/>
    <lineage>
        <taxon>Bacteria</taxon>
        <taxon>Pseudomonadati</taxon>
        <taxon>Pseudomonadota</taxon>
        <taxon>Gammaproteobacteria</taxon>
        <taxon>Alteromonadales</taxon>
        <taxon>Shewanellaceae</taxon>
        <taxon>Shewanella</taxon>
    </lineage>
</organism>
<name>DAPF_SHELP</name>
<reference key="1">
    <citation type="submission" date="2007-03" db="EMBL/GenBank/DDBJ databases">
        <title>Complete sequence of Shewanella loihica PV-4.</title>
        <authorList>
            <consortium name="US DOE Joint Genome Institute"/>
            <person name="Copeland A."/>
            <person name="Lucas S."/>
            <person name="Lapidus A."/>
            <person name="Barry K."/>
            <person name="Detter J.C."/>
            <person name="Glavina del Rio T."/>
            <person name="Hammon N."/>
            <person name="Israni S."/>
            <person name="Dalin E."/>
            <person name="Tice H."/>
            <person name="Pitluck S."/>
            <person name="Chain P."/>
            <person name="Malfatti S."/>
            <person name="Shin M."/>
            <person name="Vergez L."/>
            <person name="Schmutz J."/>
            <person name="Larimer F."/>
            <person name="Land M."/>
            <person name="Hauser L."/>
            <person name="Kyrpides N."/>
            <person name="Mikhailova N."/>
            <person name="Romine M.F."/>
            <person name="Serres G."/>
            <person name="Fredrickson J."/>
            <person name="Tiedje J."/>
            <person name="Richardson P."/>
        </authorList>
    </citation>
    <scope>NUCLEOTIDE SEQUENCE [LARGE SCALE GENOMIC DNA]</scope>
    <source>
        <strain>ATCC BAA-1088 / PV-4</strain>
    </source>
</reference>
<gene>
    <name evidence="1" type="primary">dapF</name>
    <name type="ordered locus">Shew_0323</name>
</gene>
<evidence type="ECO:0000255" key="1">
    <source>
        <dbReference type="HAMAP-Rule" id="MF_00197"/>
    </source>
</evidence>
<protein>
    <recommendedName>
        <fullName evidence="1">Diaminopimelate epimerase</fullName>
        <shortName evidence="1">DAP epimerase</shortName>
        <ecNumber evidence="1">5.1.1.7</ecNumber>
    </recommendedName>
    <alternativeName>
        <fullName evidence="1">PLP-independent amino acid racemase</fullName>
    </alternativeName>
</protein>
<sequence length="279" mass="30657">MIHFTKMHGLGNDFMVVDGVTQNVYFSPEQIKRLADRNFGIGFDQLLLVEPPYDPDLDFHYRIFNADGSEVEQCGNGARCFARFVKSKGLINKQKIKVSTSSGKMTLRLERDGSVTVNMGIPVLEPSRIPFNAKKAEKTYLLQADMPEGMQTFLCGAVSMGNPHCVLEVDDVANADVERIGSLLTKHERFPKGVNVGFMQVVDANHIKLRVYERGAAETLACGSGACAAVAVGQLQGKLARRVRVDLPGGSLTINWEGEGKPLWMTGPAEHVYDGQIQQ</sequence>
<dbReference type="EC" id="5.1.1.7" evidence="1"/>
<dbReference type="EMBL" id="CP000606">
    <property type="protein sequence ID" value="ABO22195.1"/>
    <property type="molecule type" value="Genomic_DNA"/>
</dbReference>
<dbReference type="RefSeq" id="WP_011864129.1">
    <property type="nucleotide sequence ID" value="NC_009092.1"/>
</dbReference>
<dbReference type="SMR" id="A3Q9P7"/>
<dbReference type="STRING" id="323850.Shew_0323"/>
<dbReference type="KEGG" id="slo:Shew_0323"/>
<dbReference type="eggNOG" id="COG0253">
    <property type="taxonomic scope" value="Bacteria"/>
</dbReference>
<dbReference type="HOGENOM" id="CLU_053306_1_1_6"/>
<dbReference type="OrthoDB" id="9805408at2"/>
<dbReference type="UniPathway" id="UPA00034">
    <property type="reaction ID" value="UER00025"/>
</dbReference>
<dbReference type="Proteomes" id="UP000001558">
    <property type="component" value="Chromosome"/>
</dbReference>
<dbReference type="GO" id="GO:0005829">
    <property type="term" value="C:cytosol"/>
    <property type="evidence" value="ECO:0007669"/>
    <property type="project" value="TreeGrafter"/>
</dbReference>
<dbReference type="GO" id="GO:0008837">
    <property type="term" value="F:diaminopimelate epimerase activity"/>
    <property type="evidence" value="ECO:0007669"/>
    <property type="project" value="UniProtKB-UniRule"/>
</dbReference>
<dbReference type="GO" id="GO:0009089">
    <property type="term" value="P:lysine biosynthetic process via diaminopimelate"/>
    <property type="evidence" value="ECO:0007669"/>
    <property type="project" value="UniProtKB-UniRule"/>
</dbReference>
<dbReference type="FunFam" id="3.10.310.10:FF:000001">
    <property type="entry name" value="Diaminopimelate epimerase"/>
    <property type="match status" value="1"/>
</dbReference>
<dbReference type="FunFam" id="3.10.310.10:FF:000002">
    <property type="entry name" value="Diaminopimelate epimerase"/>
    <property type="match status" value="1"/>
</dbReference>
<dbReference type="Gene3D" id="3.10.310.10">
    <property type="entry name" value="Diaminopimelate Epimerase, Chain A, domain 1"/>
    <property type="match status" value="2"/>
</dbReference>
<dbReference type="HAMAP" id="MF_00197">
    <property type="entry name" value="DAP_epimerase"/>
    <property type="match status" value="1"/>
</dbReference>
<dbReference type="InterPro" id="IPR018510">
    <property type="entry name" value="DAP_epimerase_AS"/>
</dbReference>
<dbReference type="InterPro" id="IPR001653">
    <property type="entry name" value="DAP_epimerase_DapF"/>
</dbReference>
<dbReference type="NCBIfam" id="TIGR00652">
    <property type="entry name" value="DapF"/>
    <property type="match status" value="1"/>
</dbReference>
<dbReference type="PANTHER" id="PTHR31689:SF0">
    <property type="entry name" value="DIAMINOPIMELATE EPIMERASE"/>
    <property type="match status" value="1"/>
</dbReference>
<dbReference type="PANTHER" id="PTHR31689">
    <property type="entry name" value="DIAMINOPIMELATE EPIMERASE, CHLOROPLASTIC"/>
    <property type="match status" value="1"/>
</dbReference>
<dbReference type="Pfam" id="PF01678">
    <property type="entry name" value="DAP_epimerase"/>
    <property type="match status" value="2"/>
</dbReference>
<dbReference type="SUPFAM" id="SSF54506">
    <property type="entry name" value="Diaminopimelate epimerase-like"/>
    <property type="match status" value="1"/>
</dbReference>
<dbReference type="PROSITE" id="PS01326">
    <property type="entry name" value="DAP_EPIMERASE"/>
    <property type="match status" value="1"/>
</dbReference>
<feature type="chain" id="PRO_1000011964" description="Diaminopimelate epimerase">
    <location>
        <begin position="1"/>
        <end position="279"/>
    </location>
</feature>
<feature type="active site" description="Proton donor" evidence="1">
    <location>
        <position position="74"/>
    </location>
</feature>
<feature type="active site" description="Proton acceptor" evidence="1">
    <location>
        <position position="222"/>
    </location>
</feature>
<feature type="binding site" evidence="1">
    <location>
        <position position="12"/>
    </location>
    <ligand>
        <name>substrate</name>
    </ligand>
</feature>
<feature type="binding site" evidence="1">
    <location>
        <position position="45"/>
    </location>
    <ligand>
        <name>substrate</name>
    </ligand>
</feature>
<feature type="binding site" evidence="1">
    <location>
        <position position="65"/>
    </location>
    <ligand>
        <name>substrate</name>
    </ligand>
</feature>
<feature type="binding site" evidence="1">
    <location>
        <begin position="75"/>
        <end position="76"/>
    </location>
    <ligand>
        <name>substrate</name>
    </ligand>
</feature>
<feature type="binding site" evidence="1">
    <location>
        <position position="162"/>
    </location>
    <ligand>
        <name>substrate</name>
    </ligand>
</feature>
<feature type="binding site" evidence="1">
    <location>
        <position position="195"/>
    </location>
    <ligand>
        <name>substrate</name>
    </ligand>
</feature>
<feature type="binding site" evidence="1">
    <location>
        <begin position="213"/>
        <end position="214"/>
    </location>
    <ligand>
        <name>substrate</name>
    </ligand>
</feature>
<feature type="binding site" evidence="1">
    <location>
        <begin position="223"/>
        <end position="224"/>
    </location>
    <ligand>
        <name>substrate</name>
    </ligand>
</feature>
<feature type="site" description="Could be important to modulate the pK values of the two catalytic cysteine residues" evidence="1">
    <location>
        <position position="164"/>
    </location>
</feature>
<feature type="site" description="Could be important to modulate the pK values of the two catalytic cysteine residues" evidence="1">
    <location>
        <position position="213"/>
    </location>
</feature>
<feature type="site" description="Important for dimerization" evidence="1">
    <location>
        <position position="273"/>
    </location>
</feature>
<proteinExistence type="inferred from homology"/>
<keyword id="KW-0028">Amino-acid biosynthesis</keyword>
<keyword id="KW-0963">Cytoplasm</keyword>
<keyword id="KW-0413">Isomerase</keyword>
<keyword id="KW-0457">Lysine biosynthesis</keyword>
<keyword id="KW-1185">Reference proteome</keyword>